<organism>
    <name type="scientific">Methanosphaera stadtmanae (strain ATCC 43021 / DSM 3091 / JCM 11832 / MCB-3)</name>
    <dbReference type="NCBI Taxonomy" id="339860"/>
    <lineage>
        <taxon>Archaea</taxon>
        <taxon>Methanobacteriati</taxon>
        <taxon>Methanobacteriota</taxon>
        <taxon>Methanomada group</taxon>
        <taxon>Methanobacteria</taxon>
        <taxon>Methanobacteriales</taxon>
        <taxon>Methanobacteriaceae</taxon>
        <taxon>Methanosphaera</taxon>
    </lineage>
</organism>
<keyword id="KW-1185">Reference proteome</keyword>
<keyword id="KW-0687">Ribonucleoprotein</keyword>
<keyword id="KW-0689">Ribosomal protein</keyword>
<keyword id="KW-0694">RNA-binding</keyword>
<keyword id="KW-0699">rRNA-binding</keyword>
<name>RL18_METST</name>
<feature type="chain" id="PRO_0000251398" description="Large ribosomal subunit protein uL18">
    <location>
        <begin position="1"/>
        <end position="193"/>
    </location>
</feature>
<comment type="function">
    <text evidence="1">This is one of the proteins that bind and probably mediate the attachment of the 5S RNA into the large ribosomal subunit, where it forms part of the central protuberance.</text>
</comment>
<comment type="subunit">
    <text evidence="1">Part of the 50S ribosomal subunit. Contacts the 5S and 23S rRNAs.</text>
</comment>
<comment type="similarity">
    <text evidence="1">Belongs to the universal ribosomal protein uL18 family.</text>
</comment>
<evidence type="ECO:0000255" key="1">
    <source>
        <dbReference type="HAMAP-Rule" id="MF_01337"/>
    </source>
</evidence>
<evidence type="ECO:0000305" key="2"/>
<protein>
    <recommendedName>
        <fullName evidence="1">Large ribosomal subunit protein uL18</fullName>
    </recommendedName>
    <alternativeName>
        <fullName evidence="2">50S ribosomal protein L18</fullName>
    </alternativeName>
</protein>
<reference key="1">
    <citation type="journal article" date="2006" name="J. Bacteriol.">
        <title>The genome sequence of Methanosphaera stadtmanae reveals why this human intestinal archaeon is restricted to methanol and H2 for methane formation and ATP synthesis.</title>
        <authorList>
            <person name="Fricke W.F."/>
            <person name="Seedorf H."/>
            <person name="Henne A."/>
            <person name="Kruer M."/>
            <person name="Liesegang H."/>
            <person name="Hedderich R."/>
            <person name="Gottschalk G."/>
            <person name="Thauer R.K."/>
        </authorList>
    </citation>
    <scope>NUCLEOTIDE SEQUENCE [LARGE SCALE GENOMIC DNA]</scope>
    <source>
        <strain>ATCC 43021 / DSM 3091 / JCM 11832 / MCB-3</strain>
    </source>
</reference>
<proteinExistence type="inferred from homology"/>
<dbReference type="EMBL" id="CP000102">
    <property type="protein sequence ID" value="ABC57277.1"/>
    <property type="molecule type" value="Genomic_DNA"/>
</dbReference>
<dbReference type="RefSeq" id="WP_011406476.1">
    <property type="nucleotide sequence ID" value="NC_007681.1"/>
</dbReference>
<dbReference type="SMR" id="Q2NFX6"/>
<dbReference type="STRING" id="339860.Msp_0889"/>
<dbReference type="KEGG" id="mst:Msp_0889"/>
<dbReference type="eggNOG" id="arCOG04088">
    <property type="taxonomic scope" value="Archaea"/>
</dbReference>
<dbReference type="HOGENOM" id="CLU_056222_2_0_2"/>
<dbReference type="OrthoDB" id="8644at2157"/>
<dbReference type="Proteomes" id="UP000001931">
    <property type="component" value="Chromosome"/>
</dbReference>
<dbReference type="GO" id="GO:0022625">
    <property type="term" value="C:cytosolic large ribosomal subunit"/>
    <property type="evidence" value="ECO:0007669"/>
    <property type="project" value="TreeGrafter"/>
</dbReference>
<dbReference type="GO" id="GO:0008097">
    <property type="term" value="F:5S rRNA binding"/>
    <property type="evidence" value="ECO:0007669"/>
    <property type="project" value="InterPro"/>
</dbReference>
<dbReference type="GO" id="GO:0003735">
    <property type="term" value="F:structural constituent of ribosome"/>
    <property type="evidence" value="ECO:0007669"/>
    <property type="project" value="InterPro"/>
</dbReference>
<dbReference type="GO" id="GO:0000027">
    <property type="term" value="P:ribosomal large subunit assembly"/>
    <property type="evidence" value="ECO:0007669"/>
    <property type="project" value="TreeGrafter"/>
</dbReference>
<dbReference type="GO" id="GO:0006412">
    <property type="term" value="P:translation"/>
    <property type="evidence" value="ECO:0007669"/>
    <property type="project" value="UniProtKB-UniRule"/>
</dbReference>
<dbReference type="CDD" id="cd00432">
    <property type="entry name" value="Ribosomal_L18_L5e"/>
    <property type="match status" value="1"/>
</dbReference>
<dbReference type="Gene3D" id="3.30.420.100">
    <property type="match status" value="1"/>
</dbReference>
<dbReference type="HAMAP" id="MF_01337_A">
    <property type="entry name" value="Ribosomal_uL18_A"/>
    <property type="match status" value="1"/>
</dbReference>
<dbReference type="InterPro" id="IPR005485">
    <property type="entry name" value="Rbsml_uL18_euk"/>
</dbReference>
<dbReference type="NCBIfam" id="NF006342">
    <property type="entry name" value="PRK08569.1"/>
    <property type="match status" value="1"/>
</dbReference>
<dbReference type="PANTHER" id="PTHR23410:SF12">
    <property type="entry name" value="LARGE RIBOSOMAL SUBUNIT PROTEIN UL18"/>
    <property type="match status" value="1"/>
</dbReference>
<dbReference type="PANTHER" id="PTHR23410">
    <property type="entry name" value="RIBOSOMAL PROTEIN L5-RELATED"/>
    <property type="match status" value="1"/>
</dbReference>
<dbReference type="Pfam" id="PF17144">
    <property type="entry name" value="Ribosomal_L5e"/>
    <property type="match status" value="2"/>
</dbReference>
<dbReference type="SUPFAM" id="SSF53137">
    <property type="entry name" value="Translational machinery components"/>
    <property type="match status" value="1"/>
</dbReference>
<accession>Q2NFX6</accession>
<sequence>MARGATYKVQFKRRREGKTNYNKRYKLVDLDKTRMVVRITSNHTITQLVKIGENGDETLVSATSKNLKEFGWLGNGKNTSAAYLTGYLFGKKALNEGYDETILDIGVQPSIKGTKIYAVLKGALDAGLYIPHNDSILPEDSRIRGEHIAQYAESMDDDEKNAKFANYIRCGLSPEEIPDHFESVKNKIDEATQ</sequence>
<gene>
    <name evidence="1" type="primary">rpl18</name>
    <name type="ordered locus">Msp_0889</name>
</gene>